<organism>
    <name type="scientific">Mus musculus bactrianus</name>
    <name type="common">Southwestern Asian house mouse</name>
    <dbReference type="NCBI Taxonomy" id="35531"/>
    <lineage>
        <taxon>Eukaryota</taxon>
        <taxon>Metazoa</taxon>
        <taxon>Chordata</taxon>
        <taxon>Craniata</taxon>
        <taxon>Vertebrata</taxon>
        <taxon>Euteleostomi</taxon>
        <taxon>Mammalia</taxon>
        <taxon>Eutheria</taxon>
        <taxon>Euarchontoglires</taxon>
        <taxon>Glires</taxon>
        <taxon>Rodentia</taxon>
        <taxon>Myomorpha</taxon>
        <taxon>Muroidea</taxon>
        <taxon>Muridae</taxon>
        <taxon>Murinae</taxon>
        <taxon>Mus</taxon>
        <taxon>Mus</taxon>
    </lineage>
</organism>
<reference key="1">
    <citation type="submission" date="1994-12" db="EMBL/GenBank/DDBJ databases">
        <authorList>
            <person name="Mizuno K."/>
            <person name="Saitou N."/>
            <person name="Tsutiya K."/>
            <person name="Sagai T."/>
            <person name="Moriwaki K."/>
            <person name="Shiroishi T."/>
        </authorList>
    </citation>
    <scope>NUCLEOTIDE SEQUENCE [MRNA]</scope>
    <source>
        <strain>M.BAC-IRAN</strain>
        <tissue>Spleen</tissue>
    </source>
</reference>
<feature type="propeptide" id="PRO_0000026625" description="Removed in mature form" evidence="1">
    <location>
        <begin position="1"/>
        <end position="20"/>
    </location>
</feature>
<feature type="chain" id="PRO_0000026626" description="Proteasome subunit beta type-9">
    <location>
        <begin position="21"/>
        <end position="219"/>
    </location>
</feature>
<feature type="active site" description="Nucleophile" evidence="1">
    <location>
        <position position="21"/>
    </location>
</feature>
<feature type="site" description="Cleavage; by autolysis" evidence="2">
    <location>
        <begin position="20"/>
        <end position="21"/>
    </location>
</feature>
<feature type="modified residue" description="N6-acetyllysine" evidence="3">
    <location>
        <position position="53"/>
    </location>
</feature>
<feature type="modified residue" description="N6-acetyllysine" evidence="3">
    <location>
        <position position="109"/>
    </location>
</feature>
<proteinExistence type="evidence at protein level"/>
<accession>O35522</accession>
<sequence>MLRAGAPTAGSFRTEEVHTGTTIMAVEFDGGVVVGSDSRVSAGTAVVNRVFDKLSPLHQRIFCALSGSAADAQAIADMAAYQLELHGLELEEPPLVLAAANVVKNISYKYREDLLAHLIVAGWDQREGGQVYGTMGGMLIRQPFTISGSGSSYIYGYVDAAYKPGMTPEECRRFTTNAITLAMNRDGSSGGVIYLVTITAAGVDHRVILGDELPKFYDE</sequence>
<name>PSB9_MUSMB</name>
<gene>
    <name type="primary">Psmb9</name>
    <name type="synonym">Lmp2</name>
    <name type="synonym">Ring12</name>
</gene>
<dbReference type="EC" id="3.4.25.1"/>
<dbReference type="EMBL" id="D44456">
    <property type="protein sequence ID" value="BAA22577.1"/>
    <property type="molecule type" value="mRNA"/>
</dbReference>
<dbReference type="SMR" id="O35522"/>
<dbReference type="MEROPS" id="T01.013"/>
<dbReference type="AGR" id="MGI:1346526"/>
<dbReference type="MGI" id="MGI:1346526">
    <property type="gene designation" value="Psmb9"/>
</dbReference>
<dbReference type="GO" id="GO:0005829">
    <property type="term" value="C:cytosol"/>
    <property type="evidence" value="ECO:0007669"/>
    <property type="project" value="UniProtKB-ARBA"/>
</dbReference>
<dbReference type="GO" id="GO:0005654">
    <property type="term" value="C:nucleoplasm"/>
    <property type="evidence" value="ECO:0007669"/>
    <property type="project" value="UniProtKB-ARBA"/>
</dbReference>
<dbReference type="GO" id="GO:0005839">
    <property type="term" value="C:proteasome core complex"/>
    <property type="evidence" value="ECO:0000250"/>
    <property type="project" value="UniProtKB"/>
</dbReference>
<dbReference type="GO" id="GO:0019774">
    <property type="term" value="C:proteasome core complex, beta-subunit complex"/>
    <property type="evidence" value="ECO:0000250"/>
    <property type="project" value="UniProtKB"/>
</dbReference>
<dbReference type="GO" id="GO:1990111">
    <property type="term" value="C:spermatoproteasome complex"/>
    <property type="evidence" value="ECO:0000250"/>
    <property type="project" value="UniProtKB"/>
</dbReference>
<dbReference type="GO" id="GO:0004298">
    <property type="term" value="F:threonine-type endopeptidase activity"/>
    <property type="evidence" value="ECO:0007669"/>
    <property type="project" value="UniProtKB-KW"/>
</dbReference>
<dbReference type="GO" id="GO:0002376">
    <property type="term" value="P:immune system process"/>
    <property type="evidence" value="ECO:0007669"/>
    <property type="project" value="UniProtKB-KW"/>
</dbReference>
<dbReference type="GO" id="GO:0051603">
    <property type="term" value="P:proteolysis involved in protein catabolic process"/>
    <property type="evidence" value="ECO:0007669"/>
    <property type="project" value="InterPro"/>
</dbReference>
<dbReference type="CDD" id="cd03762">
    <property type="entry name" value="proteasome_beta_type_6"/>
    <property type="match status" value="1"/>
</dbReference>
<dbReference type="FunFam" id="3.60.20.10:FF:000010">
    <property type="entry name" value="Proteasome subunit beta type-1"/>
    <property type="match status" value="1"/>
</dbReference>
<dbReference type="Gene3D" id="3.60.20.10">
    <property type="entry name" value="Glutamine Phosphoribosylpyrophosphate, subunit 1, domain 1"/>
    <property type="match status" value="1"/>
</dbReference>
<dbReference type="InterPro" id="IPR029055">
    <property type="entry name" value="Ntn_hydrolases_N"/>
</dbReference>
<dbReference type="InterPro" id="IPR000243">
    <property type="entry name" value="Pept_T1A_subB"/>
</dbReference>
<dbReference type="InterPro" id="IPR016050">
    <property type="entry name" value="Proteasome_bsu_CS"/>
</dbReference>
<dbReference type="InterPro" id="IPR001353">
    <property type="entry name" value="Proteasome_sua/b"/>
</dbReference>
<dbReference type="InterPro" id="IPR023333">
    <property type="entry name" value="Proteasome_suB-type"/>
</dbReference>
<dbReference type="PANTHER" id="PTHR32194">
    <property type="entry name" value="METALLOPROTEASE TLDD"/>
    <property type="match status" value="1"/>
</dbReference>
<dbReference type="PANTHER" id="PTHR32194:SF12">
    <property type="entry name" value="PROTEASOME SUBUNIT BETA"/>
    <property type="match status" value="1"/>
</dbReference>
<dbReference type="Pfam" id="PF00227">
    <property type="entry name" value="Proteasome"/>
    <property type="match status" value="1"/>
</dbReference>
<dbReference type="PRINTS" id="PR00141">
    <property type="entry name" value="PROTEASOME"/>
</dbReference>
<dbReference type="SUPFAM" id="SSF56235">
    <property type="entry name" value="N-terminal nucleophile aminohydrolases (Ntn hydrolases)"/>
    <property type="match status" value="1"/>
</dbReference>
<dbReference type="PROSITE" id="PS00854">
    <property type="entry name" value="PROTEASOME_BETA_1"/>
    <property type="match status" value="1"/>
</dbReference>
<dbReference type="PROSITE" id="PS51476">
    <property type="entry name" value="PROTEASOME_BETA_2"/>
    <property type="match status" value="1"/>
</dbReference>
<protein>
    <recommendedName>
        <fullName>Proteasome subunit beta type-9</fullName>
        <ecNumber>3.4.25.1</ecNumber>
    </recommendedName>
    <alternativeName>
        <fullName>Low molecular mass protein 2</fullName>
    </alternativeName>
    <alternativeName>
        <fullName>Macropain chain 7</fullName>
    </alternativeName>
    <alternativeName>
        <fullName>Multicatalytic endopeptidase complex chain 7</fullName>
    </alternativeName>
    <alternativeName>
        <fullName>Proteasome chain 7</fullName>
    </alternativeName>
    <alternativeName>
        <fullName>Proteasome subunit beta-1i</fullName>
    </alternativeName>
    <alternativeName>
        <fullName>Really interesting new gene 12 protein</fullName>
    </alternativeName>
</protein>
<evidence type="ECO:0000250" key="1"/>
<evidence type="ECO:0000250" key="2">
    <source>
        <dbReference type="UniProtKB" id="O35955"/>
    </source>
</evidence>
<evidence type="ECO:0000250" key="3">
    <source>
        <dbReference type="UniProtKB" id="P28065"/>
    </source>
</evidence>
<evidence type="ECO:0000255" key="4">
    <source>
        <dbReference type="PROSITE-ProRule" id="PRU00809"/>
    </source>
</evidence>
<comment type="function">
    <text>The proteasome is a multicatalytic proteinase complex which is characterized by its ability to cleave peptides with Arg, Phe, Tyr, Leu, and Glu adjacent to the leaving group at neutral or slightly basic pH. The proteasome has an ATP-dependent proteolytic activity. This subunit is involved in antigen processing to generate class I binding peptides.</text>
</comment>
<comment type="catalytic activity">
    <reaction>
        <text>Cleavage of peptide bonds with very broad specificity.</text>
        <dbReference type="EC" id="3.4.25.1"/>
    </reaction>
</comment>
<comment type="subunit">
    <text>The 26S proteasome consists of a 20S proteasome core and two 19S regulatory subunits. The 20S proteasome core is composed of 28 subunits that are arranged in four stacked rings, resulting in a barrel-shaped structure. The two end rings are each formed by seven alpha subunits, and the two central rings are each formed by seven beta subunits. The catalytic chamber with the active sites is on the inside of the barrel. Component of the immunoproteasome, where it displaces the equivalent housekeeping subunit PSMB6. Component of the spermatoproteasome, a form of the proteasome specifically found in testis.</text>
</comment>
<comment type="subcellular location">
    <subcellularLocation>
        <location evidence="4">Cytoplasm</location>
    </subcellularLocation>
    <subcellularLocation>
        <location evidence="1">Nucleus</location>
    </subcellularLocation>
</comment>
<comment type="induction">
    <text>Up-regulated by interferon gamma (at protein level).</text>
</comment>
<comment type="PTM">
    <text evidence="2">Autocleaved. The resulting N-terminal Thr residue of the mature subunit is responsible for the nucleophile proteolytic activity.</text>
</comment>
<comment type="miscellaneous">
    <text>Encoded in the MHC class II region.</text>
</comment>
<comment type="similarity">
    <text evidence="4">Belongs to the peptidase T1B family.</text>
</comment>
<keyword id="KW-0007">Acetylation</keyword>
<keyword id="KW-0963">Cytoplasm</keyword>
<keyword id="KW-0378">Hydrolase</keyword>
<keyword id="KW-0391">Immunity</keyword>
<keyword id="KW-0539">Nucleus</keyword>
<keyword id="KW-0645">Protease</keyword>
<keyword id="KW-0647">Proteasome</keyword>
<keyword id="KW-0888">Threonine protease</keyword>
<keyword id="KW-0865">Zymogen</keyword>